<comment type="function">
    <text evidence="1">Catalyzes the reversible formation of acyl-phosphate (acyl-PO(4)) from acyl-[acyl-carrier-protein] (acyl-ACP). This enzyme utilizes acyl-ACP as fatty acyl donor, but not acyl-CoA.</text>
</comment>
<comment type="catalytic activity">
    <reaction evidence="1">
        <text>a fatty acyl-[ACP] + phosphate = an acyl phosphate + holo-[ACP]</text>
        <dbReference type="Rhea" id="RHEA:42292"/>
        <dbReference type="Rhea" id="RHEA-COMP:9685"/>
        <dbReference type="Rhea" id="RHEA-COMP:14125"/>
        <dbReference type="ChEBI" id="CHEBI:43474"/>
        <dbReference type="ChEBI" id="CHEBI:59918"/>
        <dbReference type="ChEBI" id="CHEBI:64479"/>
        <dbReference type="ChEBI" id="CHEBI:138651"/>
        <dbReference type="EC" id="2.3.1.274"/>
    </reaction>
</comment>
<comment type="pathway">
    <text evidence="1">Lipid metabolism; phospholipid metabolism.</text>
</comment>
<comment type="subunit">
    <text evidence="1">Homodimer. Probably interacts with PlsY.</text>
</comment>
<comment type="subcellular location">
    <subcellularLocation>
        <location evidence="1">Cytoplasm</location>
    </subcellularLocation>
    <text evidence="1">Associated with the membrane possibly through PlsY.</text>
</comment>
<comment type="similarity">
    <text evidence="1">Belongs to the PlsX family.</text>
</comment>
<feature type="chain" id="PRO_0000189941" description="Phosphate acyltransferase">
    <location>
        <begin position="1"/>
        <end position="325"/>
    </location>
</feature>
<reference key="1">
    <citation type="journal article" date="2003" name="Mol. Microbiol.">
        <title>Genome-based analysis of virulence genes in a non-biofilm-forming Staphylococcus epidermidis strain (ATCC 12228).</title>
        <authorList>
            <person name="Zhang Y.-Q."/>
            <person name="Ren S.-X."/>
            <person name="Li H.-L."/>
            <person name="Wang Y.-X."/>
            <person name="Fu G."/>
            <person name="Yang J."/>
            <person name="Qin Z.-Q."/>
            <person name="Miao Y.-G."/>
            <person name="Wang W.-Y."/>
            <person name="Chen R.-S."/>
            <person name="Shen Y."/>
            <person name="Chen Z."/>
            <person name="Yuan Z.-H."/>
            <person name="Zhao G.-P."/>
            <person name="Qu D."/>
            <person name="Danchin A."/>
            <person name="Wen Y.-M."/>
        </authorList>
    </citation>
    <scope>NUCLEOTIDE SEQUENCE [LARGE SCALE GENOMIC DNA]</scope>
    <source>
        <strain>ATCC 12228 / FDA PCI 1200</strain>
    </source>
</reference>
<gene>
    <name evidence="1" type="primary">plsX</name>
    <name type="ordered locus">SE_0904</name>
</gene>
<accession>Q8CPI5</accession>
<sequence>MVKIAVDMMGGDDAPGIVLDAVKKAVEDFKDLEIILFGDESQYNLSHERIEFRHCTEKIEMEDEPVRAIKRKKDSSMVKMAEAVKSGEADGCVSAGNTGALMSAGLFIVGRIKGVARPALVVTLPTTDGKGFVFLDVGANADAKAEHLLQYAQLGNIYAQKIRGIQNPSVSLLNIGTEAAKGNSLTKKAYDLFEKNQSFNFTGNIEAKTLMDGNVDVVVTDGYTGNMVLKNLEGTAKSIGKMLKETIMSSFKNKLAGAVLKKDLETFAKKMDYSEYGGSVLLGLDGTVVKAHGSSNAKAFYSAIKQAKIAGEENIVQIMKDTVGE</sequence>
<proteinExistence type="inferred from homology"/>
<dbReference type="EC" id="2.3.1.274" evidence="1"/>
<dbReference type="EMBL" id="AE015929">
    <property type="protein sequence ID" value="AAO04501.1"/>
    <property type="molecule type" value="Genomic_DNA"/>
</dbReference>
<dbReference type="RefSeq" id="NP_764459.1">
    <property type="nucleotide sequence ID" value="NC_004461.1"/>
</dbReference>
<dbReference type="RefSeq" id="WP_001830112.1">
    <property type="nucleotide sequence ID" value="NZ_WBME01000001.1"/>
</dbReference>
<dbReference type="SMR" id="Q8CPI5"/>
<dbReference type="GeneID" id="50018958"/>
<dbReference type="KEGG" id="sep:SE_0904"/>
<dbReference type="PATRIC" id="fig|176280.10.peg.877"/>
<dbReference type="eggNOG" id="COG0416">
    <property type="taxonomic scope" value="Bacteria"/>
</dbReference>
<dbReference type="HOGENOM" id="CLU_039379_1_1_9"/>
<dbReference type="OrthoDB" id="9806408at2"/>
<dbReference type="UniPathway" id="UPA00085"/>
<dbReference type="Proteomes" id="UP000001411">
    <property type="component" value="Chromosome"/>
</dbReference>
<dbReference type="GO" id="GO:0005737">
    <property type="term" value="C:cytoplasm"/>
    <property type="evidence" value="ECO:0007669"/>
    <property type="project" value="UniProtKB-SubCell"/>
</dbReference>
<dbReference type="GO" id="GO:0043811">
    <property type="term" value="F:phosphate:acyl-[acyl carrier protein] acyltransferase activity"/>
    <property type="evidence" value="ECO:0007669"/>
    <property type="project" value="UniProtKB-UniRule"/>
</dbReference>
<dbReference type="GO" id="GO:0006633">
    <property type="term" value="P:fatty acid biosynthetic process"/>
    <property type="evidence" value="ECO:0007669"/>
    <property type="project" value="UniProtKB-UniRule"/>
</dbReference>
<dbReference type="GO" id="GO:0008654">
    <property type="term" value="P:phospholipid biosynthetic process"/>
    <property type="evidence" value="ECO:0007669"/>
    <property type="project" value="UniProtKB-KW"/>
</dbReference>
<dbReference type="Gene3D" id="3.40.718.10">
    <property type="entry name" value="Isopropylmalate Dehydrogenase"/>
    <property type="match status" value="1"/>
</dbReference>
<dbReference type="HAMAP" id="MF_00019">
    <property type="entry name" value="PlsX"/>
    <property type="match status" value="1"/>
</dbReference>
<dbReference type="InterPro" id="IPR003664">
    <property type="entry name" value="FA_synthesis"/>
</dbReference>
<dbReference type="InterPro" id="IPR012281">
    <property type="entry name" value="Phospholipid_synth_PlsX-like"/>
</dbReference>
<dbReference type="NCBIfam" id="TIGR00182">
    <property type="entry name" value="plsX"/>
    <property type="match status" value="1"/>
</dbReference>
<dbReference type="PANTHER" id="PTHR30100">
    <property type="entry name" value="FATTY ACID/PHOSPHOLIPID SYNTHESIS PROTEIN PLSX"/>
    <property type="match status" value="1"/>
</dbReference>
<dbReference type="PANTHER" id="PTHR30100:SF1">
    <property type="entry name" value="PHOSPHATE ACYLTRANSFERASE"/>
    <property type="match status" value="1"/>
</dbReference>
<dbReference type="Pfam" id="PF02504">
    <property type="entry name" value="FA_synthesis"/>
    <property type="match status" value="1"/>
</dbReference>
<dbReference type="PIRSF" id="PIRSF002465">
    <property type="entry name" value="Phsphlp_syn_PlsX"/>
    <property type="match status" value="1"/>
</dbReference>
<dbReference type="SUPFAM" id="SSF53659">
    <property type="entry name" value="Isocitrate/Isopropylmalate dehydrogenase-like"/>
    <property type="match status" value="1"/>
</dbReference>
<name>PLSX_STAES</name>
<evidence type="ECO:0000255" key="1">
    <source>
        <dbReference type="HAMAP-Rule" id="MF_00019"/>
    </source>
</evidence>
<organism>
    <name type="scientific">Staphylococcus epidermidis (strain ATCC 12228 / FDA PCI 1200)</name>
    <dbReference type="NCBI Taxonomy" id="176280"/>
    <lineage>
        <taxon>Bacteria</taxon>
        <taxon>Bacillati</taxon>
        <taxon>Bacillota</taxon>
        <taxon>Bacilli</taxon>
        <taxon>Bacillales</taxon>
        <taxon>Staphylococcaceae</taxon>
        <taxon>Staphylococcus</taxon>
    </lineage>
</organism>
<keyword id="KW-0963">Cytoplasm</keyword>
<keyword id="KW-0444">Lipid biosynthesis</keyword>
<keyword id="KW-0443">Lipid metabolism</keyword>
<keyword id="KW-0594">Phospholipid biosynthesis</keyword>
<keyword id="KW-1208">Phospholipid metabolism</keyword>
<keyword id="KW-0808">Transferase</keyword>
<protein>
    <recommendedName>
        <fullName evidence="1">Phosphate acyltransferase</fullName>
        <ecNumber evidence="1">2.3.1.274</ecNumber>
    </recommendedName>
    <alternativeName>
        <fullName evidence="1">Acyl-ACP phosphotransacylase</fullName>
    </alternativeName>
    <alternativeName>
        <fullName evidence="1">Acyl-[acyl-carrier-protein]--phosphate acyltransferase</fullName>
    </alternativeName>
    <alternativeName>
        <fullName evidence="1">Phosphate-acyl-ACP acyltransferase</fullName>
    </alternativeName>
</protein>